<organism>
    <name type="scientific">Salmonella typhimurium (strain LT2 / SGSC1412 / ATCC 700720)</name>
    <dbReference type="NCBI Taxonomy" id="99287"/>
    <lineage>
        <taxon>Bacteria</taxon>
        <taxon>Pseudomonadati</taxon>
        <taxon>Pseudomonadota</taxon>
        <taxon>Gammaproteobacteria</taxon>
        <taxon>Enterobacterales</taxon>
        <taxon>Enterobacteriaceae</taxon>
        <taxon>Salmonella</taxon>
    </lineage>
</organism>
<gene>
    <name evidence="1" type="primary">atpG</name>
    <name type="ordered locus">STM3866</name>
</gene>
<name>ATPG_SALTY</name>
<sequence length="287" mass="31555">MAGAKEIRSKIASVQNTQKITKAMEMVAASKMRKSQDRMAASRPYAETMRKVIGHLANGNLEYKHPYLEERDVKRVGYLVVSTDRGLCGGLNINLFKKLLADMKAWSDKGVQCELAMIGSKGVSFFNSVGGNVVAQVTGMGDNPSLSELIGPVKVMLQAYDEGRLDKLYIVSNKFINTMSQVPTITQLLPLPASEDDDLKRKAWDYLYEPDPKALLDTLLRRYVESQVYQGVVENLASEQAARMVAMKAATDNGGSLIKELQLVYNKARQASITQELTEIVSGAAAV</sequence>
<feature type="chain" id="PRO_0000073368" description="ATP synthase gamma chain">
    <location>
        <begin position="1"/>
        <end position="287"/>
    </location>
</feature>
<feature type="sequence conflict" description="In Ref. 1; AAF19361." evidence="2" ref="1">
    <original>N</original>
    <variation>H</variation>
    <location>
        <position position="58"/>
    </location>
</feature>
<feature type="sequence conflict" description="In Ref. 1; AAF19361." evidence="2" ref="1">
    <original>E</original>
    <variation>D</variation>
    <location>
        <position position="70"/>
    </location>
</feature>
<feature type="sequence conflict" description="In Ref. 1; AAF19361." evidence="2" ref="1">
    <original>D</original>
    <variation>E</variation>
    <location>
        <position position="102"/>
    </location>
</feature>
<feature type="sequence conflict" description="In Ref. 1; AAF19361." evidence="2" ref="1">
    <original>AWS</original>
    <variation>TWT</variation>
    <location>
        <begin position="105"/>
        <end position="107"/>
    </location>
</feature>
<feature type="sequence conflict" description="In Ref. 1; AAF19361." evidence="2" ref="1">
    <original>E</original>
    <variation>D</variation>
    <location>
        <position position="114"/>
    </location>
</feature>
<feature type="sequence conflict" description="In Ref. 1; AAF19361." evidence="2" ref="1">
    <original>N</original>
    <variation>D</variation>
    <location>
        <position position="127"/>
    </location>
</feature>
<feature type="sequence conflict" description="In Ref. 1; AAF19361." evidence="2" ref="1">
    <original>T</original>
    <variation>S</variation>
    <location>
        <position position="186"/>
    </location>
</feature>
<feature type="sequence conflict" description="In Ref. 1; AAF19361." evidence="2" ref="1">
    <original>E</original>
    <variation>D</variation>
    <location>
        <position position="195"/>
    </location>
</feature>
<feature type="sequence conflict" description="In Ref. 1; AAF19361." evidence="2" ref="1">
    <original>RKA</original>
    <variation>HKS</variation>
    <location>
        <begin position="201"/>
        <end position="203"/>
    </location>
</feature>
<evidence type="ECO:0000255" key="1">
    <source>
        <dbReference type="HAMAP-Rule" id="MF_00815"/>
    </source>
</evidence>
<evidence type="ECO:0000305" key="2"/>
<protein>
    <recommendedName>
        <fullName evidence="1">ATP synthase gamma chain</fullName>
    </recommendedName>
    <alternativeName>
        <fullName evidence="1">ATP synthase F1 sector gamma subunit</fullName>
    </alternativeName>
    <alternativeName>
        <fullName evidence="1">F-ATPase gamma subunit</fullName>
    </alternativeName>
</protein>
<comment type="function">
    <text evidence="1">Produces ATP from ADP in the presence of a proton gradient across the membrane. The gamma chain is believed to be important in regulating ATPase activity and the flow of protons through the CF(0) complex.</text>
</comment>
<comment type="subunit">
    <text evidence="1">F-type ATPases have 2 components, CF(1) - the catalytic core - and CF(0) - the membrane proton channel. CF(1) has five subunits: alpha(3), beta(3), gamma(1), delta(1), epsilon(1). CF(0) has three main subunits: a, b and c.</text>
</comment>
<comment type="subcellular location">
    <subcellularLocation>
        <location evidence="1">Cell inner membrane</location>
        <topology evidence="1">Peripheral membrane protein</topology>
    </subcellularLocation>
</comment>
<comment type="similarity">
    <text evidence="1">Belongs to the ATPase gamma chain family.</text>
</comment>
<accession>Q8ZKW8</accession>
<accession>Q9RFL4</accession>
<keyword id="KW-0066">ATP synthesis</keyword>
<keyword id="KW-0997">Cell inner membrane</keyword>
<keyword id="KW-1003">Cell membrane</keyword>
<keyword id="KW-0139">CF(1)</keyword>
<keyword id="KW-0375">Hydrogen ion transport</keyword>
<keyword id="KW-0406">Ion transport</keyword>
<keyword id="KW-0472">Membrane</keyword>
<keyword id="KW-1185">Reference proteome</keyword>
<keyword id="KW-0813">Transport</keyword>
<dbReference type="EMBL" id="AF188265">
    <property type="protein sequence ID" value="AAF19361.1"/>
    <property type="molecule type" value="mRNA"/>
</dbReference>
<dbReference type="EMBL" id="AE006468">
    <property type="protein sequence ID" value="AAL22724.1"/>
    <property type="molecule type" value="Genomic_DNA"/>
</dbReference>
<dbReference type="RefSeq" id="NP_462765.1">
    <property type="nucleotide sequence ID" value="NC_003197.2"/>
</dbReference>
<dbReference type="RefSeq" id="WP_000896506.1">
    <property type="nucleotide sequence ID" value="NC_003197.2"/>
</dbReference>
<dbReference type="SMR" id="Q8ZKW8"/>
<dbReference type="STRING" id="99287.STM3866"/>
<dbReference type="PaxDb" id="99287-STM3866"/>
<dbReference type="GeneID" id="1255393"/>
<dbReference type="GeneID" id="66758155"/>
<dbReference type="KEGG" id="stm:STM3866"/>
<dbReference type="PATRIC" id="fig|99287.12.peg.4095"/>
<dbReference type="HOGENOM" id="CLU_050669_0_1_6"/>
<dbReference type="OMA" id="MQITSAM"/>
<dbReference type="PhylomeDB" id="Q8ZKW8"/>
<dbReference type="BioCyc" id="SENT99287:STM3866-MONOMER"/>
<dbReference type="Proteomes" id="UP000001014">
    <property type="component" value="Chromosome"/>
</dbReference>
<dbReference type="GO" id="GO:0005886">
    <property type="term" value="C:plasma membrane"/>
    <property type="evidence" value="ECO:0007669"/>
    <property type="project" value="UniProtKB-SubCell"/>
</dbReference>
<dbReference type="GO" id="GO:0045259">
    <property type="term" value="C:proton-transporting ATP synthase complex"/>
    <property type="evidence" value="ECO:0007669"/>
    <property type="project" value="UniProtKB-KW"/>
</dbReference>
<dbReference type="GO" id="GO:0005524">
    <property type="term" value="F:ATP binding"/>
    <property type="evidence" value="ECO:0007669"/>
    <property type="project" value="UniProtKB-UniRule"/>
</dbReference>
<dbReference type="GO" id="GO:0046933">
    <property type="term" value="F:proton-transporting ATP synthase activity, rotational mechanism"/>
    <property type="evidence" value="ECO:0007669"/>
    <property type="project" value="UniProtKB-UniRule"/>
</dbReference>
<dbReference type="GO" id="GO:0015986">
    <property type="term" value="P:proton motive force-driven ATP synthesis"/>
    <property type="evidence" value="ECO:0000318"/>
    <property type="project" value="GO_Central"/>
</dbReference>
<dbReference type="GO" id="GO:0042777">
    <property type="term" value="P:proton motive force-driven plasma membrane ATP synthesis"/>
    <property type="evidence" value="ECO:0007669"/>
    <property type="project" value="UniProtKB-UniRule"/>
</dbReference>
<dbReference type="CDD" id="cd12151">
    <property type="entry name" value="F1-ATPase_gamma"/>
    <property type="match status" value="1"/>
</dbReference>
<dbReference type="FunFam" id="1.10.287.80:FF:000005">
    <property type="entry name" value="ATP synthase gamma chain"/>
    <property type="match status" value="2"/>
</dbReference>
<dbReference type="FunFam" id="3.40.1380.10:FF:000001">
    <property type="entry name" value="ATP synthase gamma chain"/>
    <property type="match status" value="1"/>
</dbReference>
<dbReference type="Gene3D" id="3.40.1380.10">
    <property type="match status" value="1"/>
</dbReference>
<dbReference type="Gene3D" id="1.10.287.80">
    <property type="entry name" value="ATP synthase, gamma subunit, helix hairpin domain"/>
    <property type="match status" value="1"/>
</dbReference>
<dbReference type="HAMAP" id="MF_00815">
    <property type="entry name" value="ATP_synth_gamma_bact"/>
    <property type="match status" value="1"/>
</dbReference>
<dbReference type="InterPro" id="IPR035968">
    <property type="entry name" value="ATP_synth_F1_ATPase_gsu"/>
</dbReference>
<dbReference type="InterPro" id="IPR000131">
    <property type="entry name" value="ATP_synth_F1_gsu"/>
</dbReference>
<dbReference type="InterPro" id="IPR023632">
    <property type="entry name" value="ATP_synth_F1_gsu_CS"/>
</dbReference>
<dbReference type="NCBIfam" id="TIGR01146">
    <property type="entry name" value="ATPsyn_F1gamma"/>
    <property type="match status" value="1"/>
</dbReference>
<dbReference type="NCBIfam" id="NF004144">
    <property type="entry name" value="PRK05621.1-1"/>
    <property type="match status" value="1"/>
</dbReference>
<dbReference type="PANTHER" id="PTHR11693">
    <property type="entry name" value="ATP SYNTHASE GAMMA CHAIN"/>
    <property type="match status" value="1"/>
</dbReference>
<dbReference type="PANTHER" id="PTHR11693:SF22">
    <property type="entry name" value="ATP SYNTHASE SUBUNIT GAMMA, MITOCHONDRIAL"/>
    <property type="match status" value="1"/>
</dbReference>
<dbReference type="Pfam" id="PF00231">
    <property type="entry name" value="ATP-synt"/>
    <property type="match status" value="1"/>
</dbReference>
<dbReference type="PRINTS" id="PR00126">
    <property type="entry name" value="ATPASEGAMMA"/>
</dbReference>
<dbReference type="SUPFAM" id="SSF52943">
    <property type="entry name" value="ATP synthase (F1-ATPase), gamma subunit"/>
    <property type="match status" value="1"/>
</dbReference>
<dbReference type="PROSITE" id="PS00153">
    <property type="entry name" value="ATPASE_GAMMA"/>
    <property type="match status" value="1"/>
</dbReference>
<reference key="1">
    <citation type="submission" date="1999-09" db="EMBL/GenBank/DDBJ databases">
        <title>Molecular structure of nonacistronic atp genes encoding ATP synthase in Salmonella typhimurium.</title>
        <authorList>
            <person name="Kim H.-K."/>
            <person name="Heo N.-J."/>
            <person name="Ghim S.-Y."/>
            <person name="Song B.-H."/>
        </authorList>
    </citation>
    <scope>NUCLEOTIDE SEQUENCE [MRNA]</scope>
    <source>
        <strain>TA98</strain>
    </source>
</reference>
<reference key="2">
    <citation type="journal article" date="2001" name="Nature">
        <title>Complete genome sequence of Salmonella enterica serovar Typhimurium LT2.</title>
        <authorList>
            <person name="McClelland M."/>
            <person name="Sanderson K.E."/>
            <person name="Spieth J."/>
            <person name="Clifton S.W."/>
            <person name="Latreille P."/>
            <person name="Courtney L."/>
            <person name="Porwollik S."/>
            <person name="Ali J."/>
            <person name="Dante M."/>
            <person name="Du F."/>
            <person name="Hou S."/>
            <person name="Layman D."/>
            <person name="Leonard S."/>
            <person name="Nguyen C."/>
            <person name="Scott K."/>
            <person name="Holmes A."/>
            <person name="Grewal N."/>
            <person name="Mulvaney E."/>
            <person name="Ryan E."/>
            <person name="Sun H."/>
            <person name="Florea L."/>
            <person name="Miller W."/>
            <person name="Stoneking T."/>
            <person name="Nhan M."/>
            <person name="Waterston R."/>
            <person name="Wilson R.K."/>
        </authorList>
    </citation>
    <scope>NUCLEOTIDE SEQUENCE [LARGE SCALE GENOMIC DNA]</scope>
    <source>
        <strain>LT2 / SGSC1412 / ATCC 700720</strain>
    </source>
</reference>
<proteinExistence type="evidence at transcript level"/>